<reference key="1">
    <citation type="journal article" date="2005" name="Genome Res.">
        <title>Sequence, annotation, and analysis of synteny between rice chromosome 3 and diverged grass species.</title>
        <authorList>
            <consortium name="The rice chromosome 3 sequencing consortium"/>
            <person name="Buell C.R."/>
            <person name="Yuan Q."/>
            <person name="Ouyang S."/>
            <person name="Liu J."/>
            <person name="Zhu W."/>
            <person name="Wang A."/>
            <person name="Maiti R."/>
            <person name="Haas B."/>
            <person name="Wortman J."/>
            <person name="Pertea M."/>
            <person name="Jones K.M."/>
            <person name="Kim M."/>
            <person name="Overton L."/>
            <person name="Tsitrin T."/>
            <person name="Fadrosh D."/>
            <person name="Bera J."/>
            <person name="Weaver B."/>
            <person name="Jin S."/>
            <person name="Johri S."/>
            <person name="Reardon M."/>
            <person name="Webb K."/>
            <person name="Hill J."/>
            <person name="Moffat K."/>
            <person name="Tallon L."/>
            <person name="Van Aken S."/>
            <person name="Lewis M."/>
            <person name="Utterback T."/>
            <person name="Feldblyum T."/>
            <person name="Zismann V."/>
            <person name="Iobst S."/>
            <person name="Hsiao J."/>
            <person name="de Vazeille A.R."/>
            <person name="Salzberg S.L."/>
            <person name="White O."/>
            <person name="Fraser C.M."/>
            <person name="Yu Y."/>
            <person name="Kim H."/>
            <person name="Rambo T."/>
            <person name="Currie J."/>
            <person name="Collura K."/>
            <person name="Kernodle-Thompson S."/>
            <person name="Wei F."/>
            <person name="Kudrna K."/>
            <person name="Ammiraju J.S.S."/>
            <person name="Luo M."/>
            <person name="Goicoechea J.L."/>
            <person name="Wing R.A."/>
            <person name="Henry D."/>
            <person name="Oates R."/>
            <person name="Palmer M."/>
            <person name="Pries G."/>
            <person name="Saski C."/>
            <person name="Simmons J."/>
            <person name="Soderlund C."/>
            <person name="Nelson W."/>
            <person name="de la Bastide M."/>
            <person name="Spiegel L."/>
            <person name="Nascimento L."/>
            <person name="Huang E."/>
            <person name="Preston R."/>
            <person name="Zutavern T."/>
            <person name="Palmer L."/>
            <person name="O'Shaughnessy A."/>
            <person name="Dike S."/>
            <person name="McCombie W.R."/>
            <person name="Minx P."/>
            <person name="Cordum H."/>
            <person name="Wilson R."/>
            <person name="Jin W."/>
            <person name="Lee H.R."/>
            <person name="Jiang J."/>
            <person name="Jackson S."/>
        </authorList>
    </citation>
    <scope>NUCLEOTIDE SEQUENCE [LARGE SCALE GENOMIC DNA]</scope>
    <source>
        <strain>cv. Nipponbare</strain>
    </source>
</reference>
<reference key="2">
    <citation type="journal article" date="2005" name="Nature">
        <title>The map-based sequence of the rice genome.</title>
        <authorList>
            <consortium name="International rice genome sequencing project (IRGSP)"/>
        </authorList>
    </citation>
    <scope>NUCLEOTIDE SEQUENCE [LARGE SCALE GENOMIC DNA]</scope>
    <source>
        <strain>cv. Nipponbare</strain>
    </source>
</reference>
<reference key="3">
    <citation type="journal article" date="2008" name="Nucleic Acids Res.">
        <title>The rice annotation project database (RAP-DB): 2008 update.</title>
        <authorList>
            <consortium name="The rice annotation project (RAP)"/>
        </authorList>
    </citation>
    <scope>GENOME REANNOTATION</scope>
    <source>
        <strain>cv. Nipponbare</strain>
    </source>
</reference>
<reference key="4">
    <citation type="journal article" date="2013" name="Rice">
        <title>Improvement of the Oryza sativa Nipponbare reference genome using next generation sequence and optical map data.</title>
        <authorList>
            <person name="Kawahara Y."/>
            <person name="de la Bastide M."/>
            <person name="Hamilton J.P."/>
            <person name="Kanamori H."/>
            <person name="McCombie W.R."/>
            <person name="Ouyang S."/>
            <person name="Schwartz D.C."/>
            <person name="Tanaka T."/>
            <person name="Wu J."/>
            <person name="Zhou S."/>
            <person name="Childs K.L."/>
            <person name="Davidson R.M."/>
            <person name="Lin H."/>
            <person name="Quesada-Ocampo L."/>
            <person name="Vaillancourt B."/>
            <person name="Sakai H."/>
            <person name="Lee S.S."/>
            <person name="Kim J."/>
            <person name="Numa H."/>
            <person name="Itoh T."/>
            <person name="Buell C.R."/>
            <person name="Matsumoto T."/>
        </authorList>
    </citation>
    <scope>GENOME REANNOTATION</scope>
    <source>
        <strain>cv. Nipponbare</strain>
    </source>
</reference>
<reference key="5">
    <citation type="journal article" date="2005" name="PLoS Biol.">
        <title>The genomes of Oryza sativa: a history of duplications.</title>
        <authorList>
            <person name="Yu J."/>
            <person name="Wang J."/>
            <person name="Lin W."/>
            <person name="Li S."/>
            <person name="Li H."/>
            <person name="Zhou J."/>
            <person name="Ni P."/>
            <person name="Dong W."/>
            <person name="Hu S."/>
            <person name="Zeng C."/>
            <person name="Zhang J."/>
            <person name="Zhang Y."/>
            <person name="Li R."/>
            <person name="Xu Z."/>
            <person name="Li S."/>
            <person name="Li X."/>
            <person name="Zheng H."/>
            <person name="Cong L."/>
            <person name="Lin L."/>
            <person name="Yin J."/>
            <person name="Geng J."/>
            <person name="Li G."/>
            <person name="Shi J."/>
            <person name="Liu J."/>
            <person name="Lv H."/>
            <person name="Li J."/>
            <person name="Wang J."/>
            <person name="Deng Y."/>
            <person name="Ran L."/>
            <person name="Shi X."/>
            <person name="Wang X."/>
            <person name="Wu Q."/>
            <person name="Li C."/>
            <person name="Ren X."/>
            <person name="Wang J."/>
            <person name="Wang X."/>
            <person name="Li D."/>
            <person name="Liu D."/>
            <person name="Zhang X."/>
            <person name="Ji Z."/>
            <person name="Zhao W."/>
            <person name="Sun Y."/>
            <person name="Zhang Z."/>
            <person name="Bao J."/>
            <person name="Han Y."/>
            <person name="Dong L."/>
            <person name="Ji J."/>
            <person name="Chen P."/>
            <person name="Wu S."/>
            <person name="Liu J."/>
            <person name="Xiao Y."/>
            <person name="Bu D."/>
            <person name="Tan J."/>
            <person name="Yang L."/>
            <person name="Ye C."/>
            <person name="Zhang J."/>
            <person name="Xu J."/>
            <person name="Zhou Y."/>
            <person name="Yu Y."/>
            <person name="Zhang B."/>
            <person name="Zhuang S."/>
            <person name="Wei H."/>
            <person name="Liu B."/>
            <person name="Lei M."/>
            <person name="Yu H."/>
            <person name="Li Y."/>
            <person name="Xu H."/>
            <person name="Wei S."/>
            <person name="He X."/>
            <person name="Fang L."/>
            <person name="Zhang Z."/>
            <person name="Zhang Y."/>
            <person name="Huang X."/>
            <person name="Su Z."/>
            <person name="Tong W."/>
            <person name="Li J."/>
            <person name="Tong Z."/>
            <person name="Li S."/>
            <person name="Ye J."/>
            <person name="Wang L."/>
            <person name="Fang L."/>
            <person name="Lei T."/>
            <person name="Chen C.-S."/>
            <person name="Chen H.-C."/>
            <person name="Xu Z."/>
            <person name="Li H."/>
            <person name="Huang H."/>
            <person name="Zhang F."/>
            <person name="Xu H."/>
            <person name="Li N."/>
            <person name="Zhao C."/>
            <person name="Li S."/>
            <person name="Dong L."/>
            <person name="Huang Y."/>
            <person name="Li L."/>
            <person name="Xi Y."/>
            <person name="Qi Q."/>
            <person name="Li W."/>
            <person name="Zhang B."/>
            <person name="Hu W."/>
            <person name="Zhang Y."/>
            <person name="Tian X."/>
            <person name="Jiao Y."/>
            <person name="Liang X."/>
            <person name="Jin J."/>
            <person name="Gao L."/>
            <person name="Zheng W."/>
            <person name="Hao B."/>
            <person name="Liu S.-M."/>
            <person name="Wang W."/>
            <person name="Yuan L."/>
            <person name="Cao M."/>
            <person name="McDermott J."/>
            <person name="Samudrala R."/>
            <person name="Wang J."/>
            <person name="Wong G.K.-S."/>
            <person name="Yang H."/>
        </authorList>
    </citation>
    <scope>NUCLEOTIDE SEQUENCE [LARGE SCALE GENOMIC DNA]</scope>
    <source>
        <strain>cv. Nipponbare</strain>
    </source>
</reference>
<reference key="6">
    <citation type="journal article" date="2003" name="Science">
        <title>Collection, mapping, and annotation of over 28,000 cDNA clones from japonica rice.</title>
        <authorList>
            <consortium name="The rice full-length cDNA consortium"/>
        </authorList>
    </citation>
    <scope>NUCLEOTIDE SEQUENCE [LARGE SCALE MRNA]</scope>
    <source>
        <strain>cv. Nipponbare</strain>
    </source>
</reference>
<reference key="7">
    <citation type="journal article" date="2008" name="BMC Genomics">
        <title>Genome-wide and expression analysis of protein phosphatase 2C in rice and Arabidopsis.</title>
        <authorList>
            <person name="Xue T."/>
            <person name="Wang D."/>
            <person name="Zhang S."/>
            <person name="Ehlting J."/>
            <person name="Ni F."/>
            <person name="Jacab S."/>
            <person name="Zheng C."/>
            <person name="Zhong Y."/>
        </authorList>
    </citation>
    <scope>GENE FAMILY</scope>
    <scope>NOMENCLATURE</scope>
</reference>
<feature type="chain" id="PRO_0000363279" description="Probable protein phosphatase 2C 33">
    <location>
        <begin position="1"/>
        <end position="432"/>
    </location>
</feature>
<feature type="domain" description="PPM-type phosphatase" evidence="2">
    <location>
        <begin position="27"/>
        <end position="298"/>
    </location>
</feature>
<feature type="binding site" evidence="1">
    <location>
        <position position="74"/>
    </location>
    <ligand>
        <name>Mn(2+)</name>
        <dbReference type="ChEBI" id="CHEBI:29035"/>
        <label>1</label>
    </ligand>
</feature>
<feature type="binding site" evidence="1">
    <location>
        <position position="74"/>
    </location>
    <ligand>
        <name>Mn(2+)</name>
        <dbReference type="ChEBI" id="CHEBI:29035"/>
        <label>2</label>
    </ligand>
</feature>
<feature type="binding site" evidence="1">
    <location>
        <position position="75"/>
    </location>
    <ligand>
        <name>Mn(2+)</name>
        <dbReference type="ChEBI" id="CHEBI:29035"/>
        <label>1</label>
    </ligand>
</feature>
<feature type="binding site" evidence="1">
    <location>
        <position position="250"/>
    </location>
    <ligand>
        <name>Mn(2+)</name>
        <dbReference type="ChEBI" id="CHEBI:29035"/>
        <label>2</label>
    </ligand>
</feature>
<feature type="binding site" evidence="1">
    <location>
        <position position="289"/>
    </location>
    <ligand>
        <name>Mn(2+)</name>
        <dbReference type="ChEBI" id="CHEBI:29035"/>
        <label>2</label>
    </ligand>
</feature>
<dbReference type="EC" id="3.1.3.16"/>
<dbReference type="EMBL" id="DP000009">
    <property type="protein sequence ID" value="ABF95489.1"/>
    <property type="molecule type" value="Genomic_DNA"/>
</dbReference>
<dbReference type="EMBL" id="AP008209">
    <property type="protein sequence ID" value="BAF11780.1"/>
    <property type="molecule type" value="Genomic_DNA"/>
</dbReference>
<dbReference type="EMBL" id="AP014959">
    <property type="protein sequence ID" value="BAS83775.1"/>
    <property type="molecule type" value="Genomic_DNA"/>
</dbReference>
<dbReference type="EMBL" id="CM000140">
    <property type="protein sequence ID" value="EEE58898.1"/>
    <property type="molecule type" value="Genomic_DNA"/>
</dbReference>
<dbReference type="EMBL" id="AK101878">
    <property type="protein sequence ID" value="BAG95269.1"/>
    <property type="molecule type" value="mRNA"/>
</dbReference>
<dbReference type="EMBL" id="AK102523">
    <property type="protein sequence ID" value="BAG95599.1"/>
    <property type="molecule type" value="mRNA"/>
</dbReference>
<dbReference type="EMBL" id="AK106531">
    <property type="protein sequence ID" value="BAG97753.1"/>
    <property type="molecule type" value="mRNA"/>
</dbReference>
<dbReference type="RefSeq" id="XP_015628635.1">
    <property type="nucleotide sequence ID" value="XM_015773149.1"/>
</dbReference>
<dbReference type="SMR" id="Q10MN6"/>
<dbReference type="FunCoup" id="Q10MN6">
    <property type="interactions" value="389"/>
</dbReference>
<dbReference type="STRING" id="39947.Q10MN6"/>
<dbReference type="PaxDb" id="39947-Q10MN6"/>
<dbReference type="EnsemblPlants" id="Os03t0301700-01">
    <property type="protein sequence ID" value="Os03t0301700-01"/>
    <property type="gene ID" value="Os03g0301700"/>
</dbReference>
<dbReference type="EnsemblPlants" id="Os03t0301700-02">
    <property type="protein sequence ID" value="Os03t0301700-02"/>
    <property type="gene ID" value="Os03g0301700"/>
</dbReference>
<dbReference type="Gramene" id="Os03t0301700-01">
    <property type="protein sequence ID" value="Os03t0301700-01"/>
    <property type="gene ID" value="Os03g0301700"/>
</dbReference>
<dbReference type="Gramene" id="Os03t0301700-02">
    <property type="protein sequence ID" value="Os03t0301700-02"/>
    <property type="gene ID" value="Os03g0301700"/>
</dbReference>
<dbReference type="KEGG" id="dosa:Os03g0301700"/>
<dbReference type="eggNOG" id="KOG0698">
    <property type="taxonomic scope" value="Eukaryota"/>
</dbReference>
<dbReference type="HOGENOM" id="CLU_013173_3_1_1"/>
<dbReference type="InParanoid" id="Q10MN6"/>
<dbReference type="OMA" id="PRCCSEM"/>
<dbReference type="OrthoDB" id="10264738at2759"/>
<dbReference type="Proteomes" id="UP000000763">
    <property type="component" value="Chromosome 3"/>
</dbReference>
<dbReference type="Proteomes" id="UP000007752">
    <property type="component" value="Chromosome 3"/>
</dbReference>
<dbReference type="Proteomes" id="UP000059680">
    <property type="component" value="Chromosome 3"/>
</dbReference>
<dbReference type="GO" id="GO:0046872">
    <property type="term" value="F:metal ion binding"/>
    <property type="evidence" value="ECO:0007669"/>
    <property type="project" value="UniProtKB-KW"/>
</dbReference>
<dbReference type="GO" id="GO:0004722">
    <property type="term" value="F:protein serine/threonine phosphatase activity"/>
    <property type="evidence" value="ECO:0000318"/>
    <property type="project" value="GO_Central"/>
</dbReference>
<dbReference type="GO" id="GO:1902531">
    <property type="term" value="P:regulation of intracellular signal transduction"/>
    <property type="evidence" value="ECO:0000318"/>
    <property type="project" value="GO_Central"/>
</dbReference>
<dbReference type="CDD" id="cd00143">
    <property type="entry name" value="PP2Cc"/>
    <property type="match status" value="1"/>
</dbReference>
<dbReference type="FunFam" id="3.60.40.10:FF:000013">
    <property type="entry name" value="probable protein phosphatase 2C 5"/>
    <property type="match status" value="1"/>
</dbReference>
<dbReference type="Gene3D" id="3.60.40.10">
    <property type="entry name" value="PPM-type phosphatase domain"/>
    <property type="match status" value="1"/>
</dbReference>
<dbReference type="InterPro" id="IPR015655">
    <property type="entry name" value="PP2C"/>
</dbReference>
<dbReference type="InterPro" id="IPR036457">
    <property type="entry name" value="PPM-type-like_dom_sf"/>
</dbReference>
<dbReference type="InterPro" id="IPR001932">
    <property type="entry name" value="PPM-type_phosphatase-like_dom"/>
</dbReference>
<dbReference type="PANTHER" id="PTHR47992">
    <property type="entry name" value="PROTEIN PHOSPHATASE"/>
    <property type="match status" value="1"/>
</dbReference>
<dbReference type="Pfam" id="PF00481">
    <property type="entry name" value="PP2C"/>
    <property type="match status" value="1"/>
</dbReference>
<dbReference type="SMART" id="SM00331">
    <property type="entry name" value="PP2C_SIG"/>
    <property type="match status" value="1"/>
</dbReference>
<dbReference type="SMART" id="SM00332">
    <property type="entry name" value="PP2Cc"/>
    <property type="match status" value="1"/>
</dbReference>
<dbReference type="SUPFAM" id="SSF81606">
    <property type="entry name" value="PP2C-like"/>
    <property type="match status" value="1"/>
</dbReference>
<dbReference type="PROSITE" id="PS51746">
    <property type="entry name" value="PPM_2"/>
    <property type="match status" value="1"/>
</dbReference>
<accession>Q10MN6</accession>
<accession>B9F7W3</accession>
<gene>
    <name type="ordered locus">Os03g0301700</name>
    <name type="ordered locus">LOC_Os03g18970</name>
    <name evidence="4" type="ORF">OsJ_10527</name>
</gene>
<comment type="catalytic activity">
    <reaction>
        <text>O-phospho-L-seryl-[protein] + H2O = L-seryl-[protein] + phosphate</text>
        <dbReference type="Rhea" id="RHEA:20629"/>
        <dbReference type="Rhea" id="RHEA-COMP:9863"/>
        <dbReference type="Rhea" id="RHEA-COMP:11604"/>
        <dbReference type="ChEBI" id="CHEBI:15377"/>
        <dbReference type="ChEBI" id="CHEBI:29999"/>
        <dbReference type="ChEBI" id="CHEBI:43474"/>
        <dbReference type="ChEBI" id="CHEBI:83421"/>
        <dbReference type="EC" id="3.1.3.16"/>
    </reaction>
</comment>
<comment type="catalytic activity">
    <reaction>
        <text>O-phospho-L-threonyl-[protein] + H2O = L-threonyl-[protein] + phosphate</text>
        <dbReference type="Rhea" id="RHEA:47004"/>
        <dbReference type="Rhea" id="RHEA-COMP:11060"/>
        <dbReference type="Rhea" id="RHEA-COMP:11605"/>
        <dbReference type="ChEBI" id="CHEBI:15377"/>
        <dbReference type="ChEBI" id="CHEBI:30013"/>
        <dbReference type="ChEBI" id="CHEBI:43474"/>
        <dbReference type="ChEBI" id="CHEBI:61977"/>
        <dbReference type="EC" id="3.1.3.16"/>
    </reaction>
</comment>
<comment type="cofactor">
    <cofactor evidence="1">
        <name>Mg(2+)</name>
        <dbReference type="ChEBI" id="CHEBI:18420"/>
    </cofactor>
    <cofactor evidence="1">
        <name>Mn(2+)</name>
        <dbReference type="ChEBI" id="CHEBI:29035"/>
    </cofactor>
    <text evidence="1">Binds 2 magnesium or manganese ions per subunit.</text>
</comment>
<comment type="similarity">
    <text evidence="3">Belongs to the PP2C family.</text>
</comment>
<evidence type="ECO:0000250" key="1"/>
<evidence type="ECO:0000255" key="2">
    <source>
        <dbReference type="PROSITE-ProRule" id="PRU01082"/>
    </source>
</evidence>
<evidence type="ECO:0000305" key="3"/>
<evidence type="ECO:0000312" key="4">
    <source>
        <dbReference type="EMBL" id="EEE58898.1"/>
    </source>
</evidence>
<sequence>MESAAGEEGKAAPSLPLATLIGRELRGGGSERPLVRYGHFGFAKRGEDYFLVKPDCLRVPGDPSSAFSVFAVFDGHNGVSAAVFSKEHLLEHVMSAVPQGIGRDDWLQALPRALVAGFVKTDIDFQRKGEASGTTATLVVVDGFTVTVASVGDSRCILDTQGGVISLLTVDHRLEENVEERERVTASGGEVSRLNLCGGQEVGPLRCWPGGLCLSRSIGDTDVGEFIVPIPHVKQVKLSNAGGRLIIASDGIWDALSSEAAAQACRGLPAELAAKLVVKQALKTSGLKDDTTCVVVDIIPSDHSSTPPSLSPKKNQNKLRSLLFGRRSHSSVGKLGNKSASFDSVEELFEEGSAMLDERLGRNFPSKANSSPSRCAICQVDQAPFEDLVTDNGGGCCSAPSTPWVGPYLCSDCRKKKDAMEGKRSSRSTACR</sequence>
<proteinExistence type="evidence at transcript level"/>
<name>P2C33_ORYSJ</name>
<protein>
    <recommendedName>
        <fullName>Probable protein phosphatase 2C 33</fullName>
        <shortName>OsPP2C33</shortName>
        <ecNumber>3.1.3.16</ecNumber>
    </recommendedName>
</protein>
<organism>
    <name type="scientific">Oryza sativa subsp. japonica</name>
    <name type="common">Rice</name>
    <dbReference type="NCBI Taxonomy" id="39947"/>
    <lineage>
        <taxon>Eukaryota</taxon>
        <taxon>Viridiplantae</taxon>
        <taxon>Streptophyta</taxon>
        <taxon>Embryophyta</taxon>
        <taxon>Tracheophyta</taxon>
        <taxon>Spermatophyta</taxon>
        <taxon>Magnoliopsida</taxon>
        <taxon>Liliopsida</taxon>
        <taxon>Poales</taxon>
        <taxon>Poaceae</taxon>
        <taxon>BOP clade</taxon>
        <taxon>Oryzoideae</taxon>
        <taxon>Oryzeae</taxon>
        <taxon>Oryzinae</taxon>
        <taxon>Oryza</taxon>
        <taxon>Oryza sativa</taxon>
    </lineage>
</organism>
<keyword id="KW-0378">Hydrolase</keyword>
<keyword id="KW-0460">Magnesium</keyword>
<keyword id="KW-0464">Manganese</keyword>
<keyword id="KW-0479">Metal-binding</keyword>
<keyword id="KW-0904">Protein phosphatase</keyword>
<keyword id="KW-1185">Reference proteome</keyword>